<name>ARGB_SHIB3</name>
<sequence>MNPLIIKLGGVLLDSEEALERLFSALVNYRESHQRPLVIVHGGGCVVDELMKGLNLPVKKKNGLRVTPADQIDIITGALAGTANKTLLAWAKKHQIAAVGLFLGDGDSVKVTQLDEELGHVGLAQPGSPKLINSLLENGYLPVVSSIGVTDEGQLMNVNADQAATALAATLGADLILLSDVSGILDGKGQRIAEMTAAKAEQLIEQGIITDGMIVKVNAALDAARTLGRPVDIASWRHAEQLPALFNGMPMGTRILA</sequence>
<proteinExistence type="inferred from homology"/>
<reference key="1">
    <citation type="submission" date="2008-05" db="EMBL/GenBank/DDBJ databases">
        <title>Complete sequence of Shigella boydii serotype 18 strain BS512.</title>
        <authorList>
            <person name="Rasko D.A."/>
            <person name="Rosovitz M."/>
            <person name="Maurelli A.T."/>
            <person name="Myers G."/>
            <person name="Seshadri R."/>
            <person name="Cer R."/>
            <person name="Jiang L."/>
            <person name="Ravel J."/>
            <person name="Sebastian Y."/>
        </authorList>
    </citation>
    <scope>NUCLEOTIDE SEQUENCE [LARGE SCALE GENOMIC DNA]</scope>
    <source>
        <strain>CDC 3083-94 / BS512</strain>
    </source>
</reference>
<keyword id="KW-0028">Amino-acid biosynthesis</keyword>
<keyword id="KW-0055">Arginine biosynthesis</keyword>
<keyword id="KW-0067">ATP-binding</keyword>
<keyword id="KW-0963">Cytoplasm</keyword>
<keyword id="KW-0418">Kinase</keyword>
<keyword id="KW-0547">Nucleotide-binding</keyword>
<keyword id="KW-1185">Reference proteome</keyword>
<keyword id="KW-0808">Transferase</keyword>
<feature type="chain" id="PRO_1000092888" description="Acetylglutamate kinase">
    <location>
        <begin position="1"/>
        <end position="257"/>
    </location>
</feature>
<feature type="binding site" evidence="1">
    <location>
        <begin position="43"/>
        <end position="44"/>
    </location>
    <ligand>
        <name>substrate</name>
    </ligand>
</feature>
<feature type="binding site" evidence="1">
    <location>
        <position position="65"/>
    </location>
    <ligand>
        <name>substrate</name>
    </ligand>
</feature>
<feature type="binding site" evidence="1">
    <location>
        <position position="157"/>
    </location>
    <ligand>
        <name>substrate</name>
    </ligand>
</feature>
<feature type="binding site" evidence="1">
    <location>
        <begin position="180"/>
        <end position="185"/>
    </location>
    <ligand>
        <name>ATP</name>
        <dbReference type="ChEBI" id="CHEBI:30616"/>
    </ligand>
</feature>
<feature type="binding site" evidence="1">
    <location>
        <begin position="208"/>
        <end position="210"/>
    </location>
    <ligand>
        <name>ATP</name>
        <dbReference type="ChEBI" id="CHEBI:30616"/>
    </ligand>
</feature>
<feature type="site" description="Transition state stabilizer" evidence="1">
    <location>
        <position position="7"/>
    </location>
</feature>
<feature type="site" description="Transition state stabilizer" evidence="1">
    <location>
        <position position="216"/>
    </location>
</feature>
<comment type="function">
    <text evidence="1">Catalyzes the ATP-dependent phosphorylation of N-acetyl-L-glutamate.</text>
</comment>
<comment type="catalytic activity">
    <reaction evidence="1">
        <text>N-acetyl-L-glutamate + ATP = N-acetyl-L-glutamyl 5-phosphate + ADP</text>
        <dbReference type="Rhea" id="RHEA:14629"/>
        <dbReference type="ChEBI" id="CHEBI:30616"/>
        <dbReference type="ChEBI" id="CHEBI:44337"/>
        <dbReference type="ChEBI" id="CHEBI:57936"/>
        <dbReference type="ChEBI" id="CHEBI:456216"/>
        <dbReference type="EC" id="2.7.2.8"/>
    </reaction>
</comment>
<comment type="pathway">
    <text evidence="1">Amino-acid biosynthesis; L-arginine biosynthesis; N(2)-acetyl-L-ornithine from L-glutamate: step 2/4.</text>
</comment>
<comment type="subunit">
    <text evidence="1">Homodimer.</text>
</comment>
<comment type="subcellular location">
    <subcellularLocation>
        <location evidence="1">Cytoplasm</location>
    </subcellularLocation>
</comment>
<comment type="similarity">
    <text evidence="1">Belongs to the acetylglutamate kinase family. ArgB subfamily.</text>
</comment>
<accession>B2TWF4</accession>
<protein>
    <recommendedName>
        <fullName evidence="1">Acetylglutamate kinase</fullName>
        <ecNumber evidence="1">2.7.2.8</ecNumber>
    </recommendedName>
    <alternativeName>
        <fullName evidence="1">N-acetyl-L-glutamate 5-phosphotransferase</fullName>
    </alternativeName>
    <alternativeName>
        <fullName evidence="1">NAG kinase</fullName>
        <shortName evidence="1">NAGK</shortName>
    </alternativeName>
</protein>
<organism>
    <name type="scientific">Shigella boydii serotype 18 (strain CDC 3083-94 / BS512)</name>
    <dbReference type="NCBI Taxonomy" id="344609"/>
    <lineage>
        <taxon>Bacteria</taxon>
        <taxon>Pseudomonadati</taxon>
        <taxon>Pseudomonadota</taxon>
        <taxon>Gammaproteobacteria</taxon>
        <taxon>Enterobacterales</taxon>
        <taxon>Enterobacteriaceae</taxon>
        <taxon>Shigella</taxon>
    </lineage>
</organism>
<gene>
    <name evidence="1" type="primary">argB</name>
    <name type="ordered locus">SbBS512_E4445</name>
</gene>
<dbReference type="EC" id="2.7.2.8" evidence="1"/>
<dbReference type="EMBL" id="CP001063">
    <property type="protein sequence ID" value="ACD07527.1"/>
    <property type="molecule type" value="Genomic_DNA"/>
</dbReference>
<dbReference type="SMR" id="B2TWF4"/>
<dbReference type="STRING" id="344609.SbBS512_E4445"/>
<dbReference type="KEGG" id="sbc:SbBS512_E4445"/>
<dbReference type="HOGENOM" id="CLU_053680_1_1_6"/>
<dbReference type="UniPathway" id="UPA00068">
    <property type="reaction ID" value="UER00107"/>
</dbReference>
<dbReference type="Proteomes" id="UP000001030">
    <property type="component" value="Chromosome"/>
</dbReference>
<dbReference type="GO" id="GO:0005737">
    <property type="term" value="C:cytoplasm"/>
    <property type="evidence" value="ECO:0007669"/>
    <property type="project" value="UniProtKB-SubCell"/>
</dbReference>
<dbReference type="GO" id="GO:0003991">
    <property type="term" value="F:acetylglutamate kinase activity"/>
    <property type="evidence" value="ECO:0007669"/>
    <property type="project" value="UniProtKB-UniRule"/>
</dbReference>
<dbReference type="GO" id="GO:0005524">
    <property type="term" value="F:ATP binding"/>
    <property type="evidence" value="ECO:0007669"/>
    <property type="project" value="UniProtKB-UniRule"/>
</dbReference>
<dbReference type="GO" id="GO:0042450">
    <property type="term" value="P:arginine biosynthetic process via ornithine"/>
    <property type="evidence" value="ECO:0007669"/>
    <property type="project" value="UniProtKB-UniRule"/>
</dbReference>
<dbReference type="GO" id="GO:0006526">
    <property type="term" value="P:L-arginine biosynthetic process"/>
    <property type="evidence" value="ECO:0007669"/>
    <property type="project" value="UniProtKB-UniPathway"/>
</dbReference>
<dbReference type="CDD" id="cd04249">
    <property type="entry name" value="AAK_NAGK-NC"/>
    <property type="match status" value="1"/>
</dbReference>
<dbReference type="FunFam" id="3.40.1160.10:FF:000008">
    <property type="entry name" value="Acetylglutamate kinase"/>
    <property type="match status" value="1"/>
</dbReference>
<dbReference type="Gene3D" id="3.40.1160.10">
    <property type="entry name" value="Acetylglutamate kinase-like"/>
    <property type="match status" value="1"/>
</dbReference>
<dbReference type="HAMAP" id="MF_00082">
    <property type="entry name" value="ArgB"/>
    <property type="match status" value="1"/>
</dbReference>
<dbReference type="InterPro" id="IPR036393">
    <property type="entry name" value="AceGlu_kinase-like_sf"/>
</dbReference>
<dbReference type="InterPro" id="IPR004662">
    <property type="entry name" value="AcgluKinase_fam"/>
</dbReference>
<dbReference type="InterPro" id="IPR037528">
    <property type="entry name" value="ArgB"/>
</dbReference>
<dbReference type="InterPro" id="IPR001048">
    <property type="entry name" value="Asp/Glu/Uridylate_kinase"/>
</dbReference>
<dbReference type="InterPro" id="IPR041731">
    <property type="entry name" value="NAGK-NC"/>
</dbReference>
<dbReference type="NCBIfam" id="TIGR00761">
    <property type="entry name" value="argB"/>
    <property type="match status" value="1"/>
</dbReference>
<dbReference type="PANTHER" id="PTHR23342">
    <property type="entry name" value="N-ACETYLGLUTAMATE SYNTHASE"/>
    <property type="match status" value="1"/>
</dbReference>
<dbReference type="PANTHER" id="PTHR23342:SF0">
    <property type="entry name" value="N-ACETYLGLUTAMATE SYNTHASE, MITOCHONDRIAL"/>
    <property type="match status" value="1"/>
</dbReference>
<dbReference type="Pfam" id="PF00696">
    <property type="entry name" value="AA_kinase"/>
    <property type="match status" value="1"/>
</dbReference>
<dbReference type="PIRSF" id="PIRSF000728">
    <property type="entry name" value="NAGK"/>
    <property type="match status" value="1"/>
</dbReference>
<dbReference type="SUPFAM" id="SSF53633">
    <property type="entry name" value="Carbamate kinase-like"/>
    <property type="match status" value="1"/>
</dbReference>
<evidence type="ECO:0000255" key="1">
    <source>
        <dbReference type="HAMAP-Rule" id="MF_00082"/>
    </source>
</evidence>